<dbReference type="EMBL" id="AE005674">
    <property type="protein sequence ID" value="AAN45311.1"/>
    <property type="molecule type" value="Genomic_DNA"/>
</dbReference>
<dbReference type="EMBL" id="AE014073">
    <property type="protein sequence ID" value="AAP18887.1"/>
    <property type="molecule type" value="Genomic_DNA"/>
</dbReference>
<dbReference type="RefSeq" id="NP_709604.1">
    <property type="nucleotide sequence ID" value="NC_004337.2"/>
</dbReference>
<dbReference type="RefSeq" id="WP_000921791.1">
    <property type="nucleotide sequence ID" value="NZ_WPGW01000140.1"/>
</dbReference>
<dbReference type="SMR" id="P0ACC0"/>
<dbReference type="STRING" id="198214.SF3874"/>
<dbReference type="PaxDb" id="198214-SF3874"/>
<dbReference type="GeneID" id="1026713"/>
<dbReference type="GeneID" id="93778142"/>
<dbReference type="KEGG" id="sfl:SF3874"/>
<dbReference type="KEGG" id="sfx:S3882"/>
<dbReference type="PATRIC" id="fig|198214.7.peg.4569"/>
<dbReference type="HOGENOM" id="CLU_037501_2_0_6"/>
<dbReference type="UniPathway" id="UPA00252"/>
<dbReference type="Proteomes" id="UP000001006">
    <property type="component" value="Chromosome"/>
</dbReference>
<dbReference type="Proteomes" id="UP000002673">
    <property type="component" value="Chromosome"/>
</dbReference>
<dbReference type="GO" id="GO:0005886">
    <property type="term" value="C:plasma membrane"/>
    <property type="evidence" value="ECO:0007669"/>
    <property type="project" value="UniProtKB-SubCell"/>
</dbReference>
<dbReference type="GO" id="GO:0042168">
    <property type="term" value="P:heme metabolic process"/>
    <property type="evidence" value="ECO:0007669"/>
    <property type="project" value="InterPro"/>
</dbReference>
<dbReference type="GO" id="GO:0006779">
    <property type="term" value="P:porphyrin-containing compound biosynthetic process"/>
    <property type="evidence" value="ECO:0007669"/>
    <property type="project" value="UniProtKB-KW"/>
</dbReference>
<dbReference type="Gene3D" id="1.25.40.10">
    <property type="entry name" value="Tetratricopeptide repeat domain"/>
    <property type="match status" value="2"/>
</dbReference>
<dbReference type="InterPro" id="IPR005254">
    <property type="entry name" value="Heme_biosyn_assoc_TPR_pro"/>
</dbReference>
<dbReference type="InterPro" id="IPR010817">
    <property type="entry name" value="HemY_N"/>
</dbReference>
<dbReference type="InterPro" id="IPR011990">
    <property type="entry name" value="TPR-like_helical_dom_sf"/>
</dbReference>
<dbReference type="InterPro" id="IPR013105">
    <property type="entry name" value="TPR_2"/>
</dbReference>
<dbReference type="InterPro" id="IPR019734">
    <property type="entry name" value="TPR_rpt"/>
</dbReference>
<dbReference type="NCBIfam" id="NF008017">
    <property type="entry name" value="PRK10747.1"/>
    <property type="match status" value="1"/>
</dbReference>
<dbReference type="NCBIfam" id="TIGR00540">
    <property type="entry name" value="TPR_hemY_coli"/>
    <property type="match status" value="1"/>
</dbReference>
<dbReference type="Pfam" id="PF07219">
    <property type="entry name" value="HemY_N"/>
    <property type="match status" value="1"/>
</dbReference>
<dbReference type="Pfam" id="PF07719">
    <property type="entry name" value="TPR_2"/>
    <property type="match status" value="1"/>
</dbReference>
<dbReference type="SUPFAM" id="SSF48452">
    <property type="entry name" value="TPR-like"/>
    <property type="match status" value="1"/>
</dbReference>
<dbReference type="PROSITE" id="PS50005">
    <property type="entry name" value="TPR"/>
    <property type="match status" value="2"/>
</dbReference>
<dbReference type="PROSITE" id="PS50293">
    <property type="entry name" value="TPR_REGION"/>
    <property type="match status" value="1"/>
</dbReference>
<keyword id="KW-0997">Cell inner membrane</keyword>
<keyword id="KW-1003">Cell membrane</keyword>
<keyword id="KW-0472">Membrane</keyword>
<keyword id="KW-0627">Porphyrin biosynthesis</keyword>
<keyword id="KW-1185">Reference proteome</keyword>
<keyword id="KW-0677">Repeat</keyword>
<keyword id="KW-0802">TPR repeat</keyword>
<keyword id="KW-0812">Transmembrane</keyword>
<keyword id="KW-1133">Transmembrane helix</keyword>
<evidence type="ECO:0000250" key="1"/>
<evidence type="ECO:0000255" key="2"/>
<reference key="1">
    <citation type="journal article" date="2002" name="Nucleic Acids Res.">
        <title>Genome sequence of Shigella flexneri 2a: insights into pathogenicity through comparison with genomes of Escherichia coli K12 and O157.</title>
        <authorList>
            <person name="Jin Q."/>
            <person name="Yuan Z."/>
            <person name="Xu J."/>
            <person name="Wang Y."/>
            <person name="Shen Y."/>
            <person name="Lu W."/>
            <person name="Wang J."/>
            <person name="Liu H."/>
            <person name="Yang J."/>
            <person name="Yang F."/>
            <person name="Zhang X."/>
            <person name="Zhang J."/>
            <person name="Yang G."/>
            <person name="Wu H."/>
            <person name="Qu D."/>
            <person name="Dong J."/>
            <person name="Sun L."/>
            <person name="Xue Y."/>
            <person name="Zhao A."/>
            <person name="Gao Y."/>
            <person name="Zhu J."/>
            <person name="Kan B."/>
            <person name="Ding K."/>
            <person name="Chen S."/>
            <person name="Cheng H."/>
            <person name="Yao Z."/>
            <person name="He B."/>
            <person name="Chen R."/>
            <person name="Ma D."/>
            <person name="Qiang B."/>
            <person name="Wen Y."/>
            <person name="Hou Y."/>
            <person name="Yu J."/>
        </authorList>
    </citation>
    <scope>NUCLEOTIDE SEQUENCE [LARGE SCALE GENOMIC DNA]</scope>
    <source>
        <strain>301 / Serotype 2a</strain>
    </source>
</reference>
<reference key="2">
    <citation type="journal article" date="2003" name="Infect. Immun.">
        <title>Complete genome sequence and comparative genomics of Shigella flexneri serotype 2a strain 2457T.</title>
        <authorList>
            <person name="Wei J."/>
            <person name="Goldberg M.B."/>
            <person name="Burland V."/>
            <person name="Venkatesan M.M."/>
            <person name="Deng W."/>
            <person name="Fournier G."/>
            <person name="Mayhew G.F."/>
            <person name="Plunkett G. III"/>
            <person name="Rose D.J."/>
            <person name="Darling A."/>
            <person name="Mau B."/>
            <person name="Perna N.T."/>
            <person name="Payne S.M."/>
            <person name="Runyen-Janecky L.J."/>
            <person name="Zhou S."/>
            <person name="Schwartz D.C."/>
            <person name="Blattner F.R."/>
        </authorList>
    </citation>
    <scope>NUCLEOTIDE SEQUENCE [LARGE SCALE GENOMIC DNA]</scope>
    <source>
        <strain>ATCC 700930 / 2457T / Serotype 2a</strain>
    </source>
</reference>
<sequence length="398" mass="45245">MLKVLLLFVLLIAGIVVGPMIAGHQGYVLIQTDNYNIETSVTGLAIILILAMVVLFAIEWLLRRIFRTGAHTRGWFVGRKRRRARKQTEQALLKLAEGDYQQVEKLMAKNADHAEQPVVNYLLAAEAAQQRGDEARANQHLERAAELAGNDTIPVEITRVRLQLARNENHAARHGVDKLLEVTPRHPEVLRLAEQAYIRTGAWSSLLDIIPSMAKAHVGDEEHRAMLEQQAWIGLMDQARADNGSEGLRNWWKNQSRKTRHQVALQVAMAEHLIECDDHDTAQQIIIDGLKRQYDDRLLLPIPRLKTNNPEQLEKVLRQQIKNVGDRPLLWSTLGQSLMKHGEWQEASLAFRAALKQRPDAYDYAWLADALDRLHKPEEAAAMRRDGLMLTLQNNPPQ</sequence>
<feature type="chain" id="PRO_0000135279" description="Protein HemY">
    <location>
        <begin position="1"/>
        <end position="398"/>
    </location>
</feature>
<feature type="topological domain" description="Cytoplasmic" evidence="2">
    <location>
        <begin position="1"/>
        <end position="4"/>
    </location>
</feature>
<feature type="transmembrane region" description="Helical" evidence="2">
    <location>
        <begin position="5"/>
        <end position="27"/>
    </location>
</feature>
<feature type="topological domain" description="Periplasmic" evidence="2">
    <location>
        <begin position="28"/>
        <end position="39"/>
    </location>
</feature>
<feature type="transmembrane region" description="Helical" evidence="2">
    <location>
        <begin position="40"/>
        <end position="62"/>
    </location>
</feature>
<feature type="topological domain" description="Cytoplasmic" evidence="2">
    <location>
        <begin position="63"/>
        <end position="398"/>
    </location>
</feature>
<feature type="repeat" description="TPR 1">
    <location>
        <begin position="118"/>
        <end position="151"/>
    </location>
</feature>
<feature type="repeat" description="TPR 2">
    <location>
        <begin position="328"/>
        <end position="361"/>
    </location>
</feature>
<accession>P0ACC0</accession>
<accession>P09128</accession>
<name>HEMY_SHIFL</name>
<comment type="function">
    <text evidence="1">Involved in a late step of protoheme IX synthesis.</text>
</comment>
<comment type="pathway">
    <text>Porphyrin-containing compound metabolism; protoheme biosynthesis.</text>
</comment>
<comment type="subcellular location">
    <subcellularLocation>
        <location evidence="1">Cell inner membrane</location>
        <topology evidence="1">Multi-pass membrane protein</topology>
    </subcellularLocation>
</comment>
<gene>
    <name type="primary">hemY</name>
    <name type="ordered locus">SF3874</name>
    <name type="ordered locus">S3882</name>
</gene>
<proteinExistence type="inferred from homology"/>
<organism>
    <name type="scientific">Shigella flexneri</name>
    <dbReference type="NCBI Taxonomy" id="623"/>
    <lineage>
        <taxon>Bacteria</taxon>
        <taxon>Pseudomonadati</taxon>
        <taxon>Pseudomonadota</taxon>
        <taxon>Gammaproteobacteria</taxon>
        <taxon>Enterobacterales</taxon>
        <taxon>Enterobacteriaceae</taxon>
        <taxon>Shigella</taxon>
    </lineage>
</organism>
<protein>
    <recommendedName>
        <fullName>Protein HemY</fullName>
    </recommendedName>
</protein>